<keyword id="KW-0472">Membrane</keyword>
<keyword id="KW-1185">Reference proteome</keyword>
<keyword id="KW-0677">Repeat</keyword>
<keyword id="KW-0812">Transmembrane</keyword>
<keyword id="KW-1133">Transmembrane helix</keyword>
<keyword id="KW-0813">Transport</keyword>
<organism>
    <name type="scientific">Laccaria bicolor (strain S238N-H82 / ATCC MYA-4686)</name>
    <name type="common">Bicoloured deceiver</name>
    <name type="synonym">Laccaria laccata var. bicolor</name>
    <dbReference type="NCBI Taxonomy" id="486041"/>
    <lineage>
        <taxon>Eukaryota</taxon>
        <taxon>Fungi</taxon>
        <taxon>Dikarya</taxon>
        <taxon>Basidiomycota</taxon>
        <taxon>Agaricomycotina</taxon>
        <taxon>Agaricomycetes</taxon>
        <taxon>Agaricomycetidae</taxon>
        <taxon>Agaricales</taxon>
        <taxon>Agaricineae</taxon>
        <taxon>Hydnangiaceae</taxon>
        <taxon>Laccaria</taxon>
    </lineage>
</organism>
<dbReference type="EMBL" id="DS547097">
    <property type="protein sequence ID" value="EDR10355.1"/>
    <property type="molecule type" value="Genomic_DNA"/>
</dbReference>
<dbReference type="RefSeq" id="XP_001878805.1">
    <property type="nucleotide sequence ID" value="XM_001878770.1"/>
</dbReference>
<dbReference type="SMR" id="B0D4J9"/>
<dbReference type="FunCoup" id="B0D4J9">
    <property type="interactions" value="60"/>
</dbReference>
<dbReference type="STRING" id="486041.B0D4J9"/>
<dbReference type="GeneID" id="6074749"/>
<dbReference type="KEGG" id="lbc:LACBIDRAFT_317173"/>
<dbReference type="HOGENOM" id="CLU_020019_9_0_1"/>
<dbReference type="InParanoid" id="B0D4J9"/>
<dbReference type="OrthoDB" id="3222at2759"/>
<dbReference type="Proteomes" id="UP000001194">
    <property type="component" value="Unassembled WGS sequence"/>
</dbReference>
<dbReference type="GO" id="GO:0005886">
    <property type="term" value="C:plasma membrane"/>
    <property type="evidence" value="ECO:0007669"/>
    <property type="project" value="TreeGrafter"/>
</dbReference>
<dbReference type="GO" id="GO:0015254">
    <property type="term" value="F:glycerol channel activity"/>
    <property type="evidence" value="ECO:0007669"/>
    <property type="project" value="TreeGrafter"/>
</dbReference>
<dbReference type="GO" id="GO:0015250">
    <property type="term" value="F:water channel activity"/>
    <property type="evidence" value="ECO:0007669"/>
    <property type="project" value="TreeGrafter"/>
</dbReference>
<dbReference type="CDD" id="cd00333">
    <property type="entry name" value="MIP"/>
    <property type="match status" value="1"/>
</dbReference>
<dbReference type="FunFam" id="1.20.1080.10:FF:000027">
    <property type="entry name" value="MIP aquaporin"/>
    <property type="match status" value="1"/>
</dbReference>
<dbReference type="Gene3D" id="1.20.1080.10">
    <property type="entry name" value="Glycerol uptake facilitator protein"/>
    <property type="match status" value="1"/>
</dbReference>
<dbReference type="InterPro" id="IPR023271">
    <property type="entry name" value="Aquaporin-like"/>
</dbReference>
<dbReference type="InterPro" id="IPR000425">
    <property type="entry name" value="MIP"/>
</dbReference>
<dbReference type="InterPro" id="IPR050363">
    <property type="entry name" value="MIP/Aquaporin"/>
</dbReference>
<dbReference type="InterPro" id="IPR022357">
    <property type="entry name" value="MIP_CS"/>
</dbReference>
<dbReference type="NCBIfam" id="TIGR00861">
    <property type="entry name" value="MIP"/>
    <property type="match status" value="1"/>
</dbReference>
<dbReference type="PANTHER" id="PTHR43829">
    <property type="entry name" value="AQUAPORIN OR AQUAGLYCEROPORIN RELATED"/>
    <property type="match status" value="1"/>
</dbReference>
<dbReference type="PANTHER" id="PTHR43829:SF9">
    <property type="entry name" value="AQUAPORIN-9"/>
    <property type="match status" value="1"/>
</dbReference>
<dbReference type="Pfam" id="PF00230">
    <property type="entry name" value="MIP"/>
    <property type="match status" value="1"/>
</dbReference>
<dbReference type="PRINTS" id="PR02019">
    <property type="entry name" value="AQUAPORIN7"/>
</dbReference>
<dbReference type="PRINTS" id="PR00783">
    <property type="entry name" value="MINTRINSICP"/>
</dbReference>
<dbReference type="SUPFAM" id="SSF81338">
    <property type="entry name" value="Aquaporin-like"/>
    <property type="match status" value="1"/>
</dbReference>
<dbReference type="PROSITE" id="PS00221">
    <property type="entry name" value="MIP"/>
    <property type="match status" value="1"/>
</dbReference>
<sequence>MSGQHQITEQSSRNPLSRVSTLLPEKPLSPTSTYAGTQKHPEAPRQSSFLIQLQNIRNAIRKPMAEFFGVALLIIFGAGSACQVVLSTNPDVASSARGSFLSINFGWAIGIAMGVWVSGGISGGHINPAITIAMATYRGFPWRKVPSYILAQVLGGVVGAGLVYANYIHAIDIFEGGHHIRTQATASLFATYALPYMTQASCFFSEFLATAVLSMMVFALTDKRNHSPTNGLLPFALFILFVGLGASLGMETAYALNPARDFGPRLFLAMAGYGKALFNYRSQYWLWAPIIAPVLGAQAGGLLYDTFLNDGDNSPIKWRCASSQEHQLAEVV</sequence>
<comment type="function">
    <text evidence="3">Water channel required to facilitate the transport of water across membranes (PubMed:21352231). Acts as the most efficient Laccaria water channel (PubMed:21352231). In addition to water, also shows strong ammonium transport activity (PubMed:21352231). May be involved in fungal nitrogen (ammonium) support of the plant host in symbiosis (PubMed:21352231).</text>
</comment>
<comment type="catalytic activity">
    <reaction evidence="3">
        <text>H2O(in) = H2O(out)</text>
        <dbReference type="Rhea" id="RHEA:29667"/>
        <dbReference type="ChEBI" id="CHEBI:15377"/>
    </reaction>
</comment>
<comment type="catalytic activity">
    <reaction evidence="3">
        <text>NH4(+)(in) = NH4(+)(out)</text>
        <dbReference type="Rhea" id="RHEA:28747"/>
        <dbReference type="ChEBI" id="CHEBI:28938"/>
    </reaction>
</comment>
<comment type="subcellular location">
    <subcellularLocation>
        <location evidence="1">Membrane</location>
        <topology evidence="1">Multi-pass membrane protein</topology>
    </subcellularLocation>
</comment>
<comment type="induction">
    <text evidence="3">Expression is induced 4-fold during ectomycorrhiza formation (PubMed:21352231). Expression is highest at 15 degrees Celsius and decreases at any other temperature (PubMed:21352231).</text>
</comment>
<comment type="domain">
    <text evidence="6">Aquaporins contain two tandem repeats each containing three membrane-spanning domains and a pore-forming loop with the signature motif Asn-Pro-Ala (NPA).</text>
</comment>
<comment type="similarity">
    <text evidence="5">Belongs to the MIP/aquaporin (TC 1.A.8) family.</text>
</comment>
<gene>
    <name type="ORF">Lacbi1:317173</name>
    <name type="ORF">LACBIDRAFT_317173</name>
</gene>
<reference key="1">
    <citation type="journal article" date="2008" name="Nature">
        <title>The genome of Laccaria bicolor provides insights into mycorrhizal symbiosis.</title>
        <authorList>
            <person name="Martin F."/>
            <person name="Aerts A."/>
            <person name="Ahren D."/>
            <person name="Brun A."/>
            <person name="Danchin E.G.J."/>
            <person name="Duchaussoy F."/>
            <person name="Gibon J."/>
            <person name="Kohler A."/>
            <person name="Lindquist E."/>
            <person name="Pereda V."/>
            <person name="Salamov A."/>
            <person name="Shapiro H.J."/>
            <person name="Wuyts J."/>
            <person name="Blaudez D."/>
            <person name="Buee M."/>
            <person name="Brokstein P."/>
            <person name="Canbaeck B."/>
            <person name="Cohen D."/>
            <person name="Courty P.E."/>
            <person name="Coutinho P.M."/>
            <person name="Delaruelle C."/>
            <person name="Detter J.C."/>
            <person name="Deveau A."/>
            <person name="DiFazio S."/>
            <person name="Duplessis S."/>
            <person name="Fraissinet-Tachet L."/>
            <person name="Lucic E."/>
            <person name="Frey-Klett P."/>
            <person name="Fourrey C."/>
            <person name="Feussner I."/>
            <person name="Gay G."/>
            <person name="Grimwood J."/>
            <person name="Hoegger P.J."/>
            <person name="Jain P."/>
            <person name="Kilaru S."/>
            <person name="Labbe J."/>
            <person name="Lin Y.C."/>
            <person name="Legue V."/>
            <person name="Le Tacon F."/>
            <person name="Marmeisse R."/>
            <person name="Melayah D."/>
            <person name="Montanini B."/>
            <person name="Muratet M."/>
            <person name="Nehls U."/>
            <person name="Niculita-Hirzel H."/>
            <person name="Oudot-Le Secq M.P."/>
            <person name="Peter M."/>
            <person name="Quesneville H."/>
            <person name="Rajashekar B."/>
            <person name="Reich M."/>
            <person name="Rouhier N."/>
            <person name="Schmutz J."/>
            <person name="Yin T."/>
            <person name="Chalot M."/>
            <person name="Henrissat B."/>
            <person name="Kuees U."/>
            <person name="Lucas S."/>
            <person name="Van de Peer Y."/>
            <person name="Podila G.K."/>
            <person name="Polle A."/>
            <person name="Pukkila P.J."/>
            <person name="Richardson P.M."/>
            <person name="Rouze P."/>
            <person name="Sanders I.R."/>
            <person name="Stajich J.E."/>
            <person name="Tunlid A."/>
            <person name="Tuskan G."/>
            <person name="Grigoriev I.V."/>
        </authorList>
    </citation>
    <scope>NUCLEOTIDE SEQUENCE [LARGE SCALE GENOMIC DNA]</scope>
    <source>
        <strain>S238N-H82 / ATCC MYA-4686</strain>
    </source>
</reference>
<reference key="2">
    <citation type="journal article" date="2011" name="New Phytol.">
        <title>The aquaporin gene family of the ectomycorrhizal fungus Laccaria bicolor: lessons for symbiotic functions.</title>
        <authorList>
            <person name="Dietz S."/>
            <person name="von Buelow J."/>
            <person name="Beitz E."/>
            <person name="Nehls U."/>
        </authorList>
    </citation>
    <scope>FUNCTION</scope>
    <scope>DOMAIN</scope>
    <scope>TOPOLOGY</scope>
    <scope>TRANSPORTER ACTIVITY</scope>
    <scope>INDUCTION</scope>
</reference>
<name>AQP7_LACBS</name>
<evidence type="ECO:0000255" key="1"/>
<evidence type="ECO:0000256" key="2">
    <source>
        <dbReference type="SAM" id="MobiDB-lite"/>
    </source>
</evidence>
<evidence type="ECO:0000269" key="3">
    <source>
    </source>
</evidence>
<evidence type="ECO:0000303" key="4">
    <source>
    </source>
</evidence>
<evidence type="ECO:0000305" key="5"/>
<evidence type="ECO:0000305" key="6">
    <source>
    </source>
</evidence>
<protein>
    <recommendedName>
        <fullName evidence="4">Aquaporin Lacbi1:317173</fullName>
    </recommendedName>
</protein>
<feature type="chain" id="PRO_0000457458" description="Aquaporin Lacbi1:317173">
    <location>
        <begin position="1"/>
        <end position="332"/>
    </location>
</feature>
<feature type="topological domain" description="Cytoplasmic" evidence="6">
    <location>
        <begin position="1"/>
        <end position="66"/>
    </location>
</feature>
<feature type="transmembrane region" description="Helical" evidence="1">
    <location>
        <begin position="67"/>
        <end position="87"/>
    </location>
</feature>
<feature type="topological domain" description="Extracellular" evidence="6">
    <location>
        <begin position="88"/>
        <end position="100"/>
    </location>
</feature>
<feature type="transmembrane region" description="Helical" evidence="1">
    <location>
        <begin position="101"/>
        <end position="121"/>
    </location>
</feature>
<feature type="topological domain" description="Cytoplasmic" evidence="6">
    <location>
        <begin position="122"/>
        <end position="144"/>
    </location>
</feature>
<feature type="transmembrane region" description="Helical" evidence="1">
    <location>
        <begin position="145"/>
        <end position="165"/>
    </location>
</feature>
<feature type="topological domain" description="Extracellular" evidence="6">
    <location>
        <begin position="166"/>
        <end position="199"/>
    </location>
</feature>
<feature type="transmembrane region" description="Helical" evidence="1">
    <location>
        <begin position="200"/>
        <end position="220"/>
    </location>
</feature>
<feature type="topological domain" description="Cytoplasmic" evidence="6">
    <location>
        <begin position="221"/>
        <end position="230"/>
    </location>
</feature>
<feature type="transmembrane region" description="Helical" evidence="1">
    <location>
        <begin position="231"/>
        <end position="251"/>
    </location>
</feature>
<feature type="topological domain" description="Extracellular" evidence="6">
    <location>
        <begin position="252"/>
        <end position="283"/>
    </location>
</feature>
<feature type="transmembrane region" description="Helical" evidence="1">
    <location>
        <begin position="284"/>
        <end position="304"/>
    </location>
</feature>
<feature type="topological domain" description="Cytoplasmic" evidence="6">
    <location>
        <begin position="305"/>
        <end position="332"/>
    </location>
</feature>
<feature type="region of interest" description="Disordered" evidence="2">
    <location>
        <begin position="1"/>
        <end position="45"/>
    </location>
</feature>
<feature type="short sequence motif" description="NPA 1" evidence="6">
    <location>
        <begin position="127"/>
        <end position="129"/>
    </location>
</feature>
<feature type="short sequence motif" description="NPA 2" evidence="6">
    <location>
        <begin position="257"/>
        <end position="259"/>
    </location>
</feature>
<feature type="compositionally biased region" description="Polar residues" evidence="2">
    <location>
        <begin position="1"/>
        <end position="20"/>
    </location>
</feature>
<accession>B0D4J9</accession>
<proteinExistence type="evidence at protein level"/>